<dbReference type="EMBL" id="AB506492">
    <property type="protein sequence ID" value="BAK26557.1"/>
    <property type="molecule type" value="Genomic_DNA"/>
</dbReference>
<dbReference type="SMR" id="F5HN69"/>
<dbReference type="GlyCosmos" id="F5HN69">
    <property type="glycosylation" value="3 sites, No reported glycans"/>
</dbReference>
<dbReference type="VEuPathDB" id="FungiDB:AO090026000005"/>
<dbReference type="OMA" id="WNIACAV"/>
<dbReference type="GO" id="GO:0016020">
    <property type="term" value="C:membrane"/>
    <property type="evidence" value="ECO:0007669"/>
    <property type="project" value="UniProtKB-SubCell"/>
</dbReference>
<dbReference type="GO" id="GO:0022857">
    <property type="term" value="F:transmembrane transporter activity"/>
    <property type="evidence" value="ECO:0007669"/>
    <property type="project" value="InterPro"/>
</dbReference>
<dbReference type="CDD" id="cd17323">
    <property type="entry name" value="MFS_Tpo1_MDR_like"/>
    <property type="match status" value="1"/>
</dbReference>
<dbReference type="FunFam" id="1.20.1250.20:FF:000011">
    <property type="entry name" value="MFS multidrug transporter, putative"/>
    <property type="match status" value="1"/>
</dbReference>
<dbReference type="Gene3D" id="1.20.1250.20">
    <property type="entry name" value="MFS general substrate transporter like domains"/>
    <property type="match status" value="1"/>
</dbReference>
<dbReference type="InterPro" id="IPR011701">
    <property type="entry name" value="MFS"/>
</dbReference>
<dbReference type="InterPro" id="IPR020846">
    <property type="entry name" value="MFS_dom"/>
</dbReference>
<dbReference type="InterPro" id="IPR036259">
    <property type="entry name" value="MFS_trans_sf"/>
</dbReference>
<dbReference type="PANTHER" id="PTHR23502">
    <property type="entry name" value="MAJOR FACILITATOR SUPERFAMILY"/>
    <property type="match status" value="1"/>
</dbReference>
<dbReference type="PANTHER" id="PTHR23502:SF68">
    <property type="entry name" value="MULTIDRUG TRANSPORTER, PUTATIVE (AFU_ORTHOLOGUE AFUA_3G01120)-RELATED"/>
    <property type="match status" value="1"/>
</dbReference>
<dbReference type="Pfam" id="PF07690">
    <property type="entry name" value="MFS_1"/>
    <property type="match status" value="1"/>
</dbReference>
<dbReference type="SUPFAM" id="SSF103473">
    <property type="entry name" value="MFS general substrate transporter"/>
    <property type="match status" value="1"/>
</dbReference>
<dbReference type="PROSITE" id="PS50850">
    <property type="entry name" value="MFS"/>
    <property type="match status" value="1"/>
</dbReference>
<keyword id="KW-0325">Glycoprotein</keyword>
<keyword id="KW-0472">Membrane</keyword>
<keyword id="KW-0812">Transmembrane</keyword>
<keyword id="KW-1133">Transmembrane helix</keyword>
<keyword id="KW-0813">Transport</keyword>
<feature type="chain" id="PRO_0000445390" description="MFS transporter cpaT">
    <location>
        <begin position="1"/>
        <end position="496"/>
    </location>
</feature>
<feature type="transmembrane region" description="Helical" evidence="1">
    <location>
        <begin position="58"/>
        <end position="78"/>
    </location>
</feature>
<feature type="transmembrane region" description="Helical" evidence="1">
    <location>
        <begin position="93"/>
        <end position="113"/>
    </location>
</feature>
<feature type="transmembrane region" description="Helical" evidence="1">
    <location>
        <begin position="130"/>
        <end position="150"/>
    </location>
</feature>
<feature type="transmembrane region" description="Helical" evidence="1">
    <location>
        <begin position="154"/>
        <end position="174"/>
    </location>
</feature>
<feature type="transmembrane region" description="Helical" evidence="1">
    <location>
        <begin position="180"/>
        <end position="200"/>
    </location>
</feature>
<feature type="transmembrane region" description="Helical" evidence="1">
    <location>
        <begin position="212"/>
        <end position="232"/>
    </location>
</feature>
<feature type="transmembrane region" description="Helical" evidence="1">
    <location>
        <begin position="288"/>
        <end position="308"/>
    </location>
</feature>
<feature type="transmembrane region" description="Helical" evidence="1">
    <location>
        <begin position="325"/>
        <end position="345"/>
    </location>
</feature>
<feature type="transmembrane region" description="Helical" evidence="1">
    <location>
        <begin position="367"/>
        <end position="387"/>
    </location>
</feature>
<feature type="transmembrane region" description="Helical" evidence="1">
    <location>
        <begin position="395"/>
        <end position="415"/>
    </location>
</feature>
<feature type="transmembrane region" description="Helical" evidence="1">
    <location>
        <begin position="427"/>
        <end position="449"/>
    </location>
</feature>
<feature type="transmembrane region" description="Helical" evidence="1">
    <location>
        <begin position="463"/>
        <end position="483"/>
    </location>
</feature>
<feature type="region of interest" description="Disordered" evidence="3">
    <location>
        <begin position="1"/>
        <end position="45"/>
    </location>
</feature>
<feature type="compositionally biased region" description="Basic and acidic residues" evidence="3">
    <location>
        <begin position="18"/>
        <end position="32"/>
    </location>
</feature>
<feature type="glycosylation site" description="N-linked (GlcNAc...) asparagine" evidence="2">
    <location>
        <position position="48"/>
    </location>
</feature>
<feature type="glycosylation site" description="N-linked (GlcNAc...) asparagine" evidence="2">
    <location>
        <position position="90"/>
    </location>
</feature>
<feature type="glycosylation site" description="N-linked (GlcNAc...) asparagine" evidence="2">
    <location>
        <position position="252"/>
    </location>
</feature>
<accession>F5HN69</accession>
<evidence type="ECO:0000255" key="1"/>
<evidence type="ECO:0000255" key="2">
    <source>
        <dbReference type="PROSITE-ProRule" id="PRU00498"/>
    </source>
</evidence>
<evidence type="ECO:0000256" key="3">
    <source>
        <dbReference type="SAM" id="MobiDB-lite"/>
    </source>
</evidence>
<evidence type="ECO:0000269" key="4">
    <source>
    </source>
</evidence>
<evidence type="ECO:0000303" key="5">
    <source>
    </source>
</evidence>
<evidence type="ECO:0000305" key="6"/>
<reference key="1">
    <citation type="journal article" date="2011" name="ChemBioChem">
        <title>Genetic safeguard against mycotoxin cyclopiazonic acid production in Aspergillus oryzae.</title>
        <authorList>
            <person name="Kato N."/>
            <person name="Tokuoka M."/>
            <person name="Shinohara Y."/>
            <person name="Kawatani M."/>
            <person name="Uramoto M."/>
            <person name="Seshime Y."/>
            <person name="Fujii I."/>
            <person name="Kitamoto K."/>
            <person name="Takahashi T."/>
            <person name="Takahashi S."/>
            <person name="Koyama Y."/>
            <person name="Osada H."/>
        </authorList>
    </citation>
    <scope>NUCLEOTIDE SEQUENCE [GENOMIC DNA]</scope>
    <scope>DISRUPTION PHENOTYPE</scope>
    <scope>FUNCTION</scope>
    <source>
        <strain>NBRC 4177</strain>
    </source>
</reference>
<protein>
    <recommendedName>
        <fullName evidence="5">MFS transporter cpaT</fullName>
    </recommendedName>
    <alternativeName>
        <fullName evidence="5">Cyclopiazonic acid biosynthesis cluster protein T</fullName>
    </alternativeName>
</protein>
<organism>
    <name type="scientific">Aspergillus oryzae</name>
    <name type="common">Yellow koji mold</name>
    <dbReference type="NCBI Taxonomy" id="5062"/>
    <lineage>
        <taxon>Eukaryota</taxon>
        <taxon>Fungi</taxon>
        <taxon>Dikarya</taxon>
        <taxon>Ascomycota</taxon>
        <taxon>Pezizomycotina</taxon>
        <taxon>Eurotiomycetes</taxon>
        <taxon>Eurotiomycetidae</taxon>
        <taxon>Eurotiales</taxon>
        <taxon>Aspergillaceae</taxon>
        <taxon>Aspergillus</taxon>
        <taxon>Aspergillus subgen. Circumdati</taxon>
    </lineage>
</organism>
<gene>
    <name evidence="5" type="primary">cpaT</name>
</gene>
<proteinExistence type="inferred from homology"/>
<comment type="function">
    <text evidence="4">MFS transporter; part of the gene cluster that mediates the biosynthesis of the fungal neurotoxin cyclopiazonic acid (CPA), a nanomolar inhibitor of Ca(2+)-ATPase with a unique pentacyclic indole tetramic acid scaffold.</text>
</comment>
<comment type="subcellular location">
    <subcellularLocation>
        <location evidence="1">Membrane</location>
        <topology evidence="1">Multi-pass membrane protein</topology>
    </subcellularLocation>
</comment>
<comment type="disruption phenotype">
    <text evidence="4">Has no significant effect on the synthesis of 2-oxocyclopiazonic acid, cyclopiazonic acid (CPA) and their biosynthetic intermediates.</text>
</comment>
<comment type="similarity">
    <text evidence="6">Belongs to the major facilitator superfamily.</text>
</comment>
<name>CPAT_ASPOZ</name>
<sequence length="496" mass="53808">MGHQEEPPRICKTPSGHEQGEGPAEKTSKPSTEEVGWDGPTDPARPVNWSRKKKWWNMGIISYLTFLTPLTSSIVAPAQGLVMKDFHSTNRTLASFVVSIYLVGFAVGPLFLAPLSEIYGRLRVYQVGTFIFTIWNIAGAVAPNVGALLVFRLFAGISGSGPVTLGAGSVADMFARQERGVAMSLYGLGPLLGPVIGPIAGGYLSQAQGWRWVFWLLAIVSGVAVILVLFVLSESYEPVLLRQKAKRIRRENSSVEVNAGQALKLDSRKVFIQAITRPTKLLFLTPNVALFSLYTGVVFGYLYLLFTTVTEVYETTYHFSQGATGLVYIGIGVGALIGISCFGALSDKIQNILIARNNGQAEPEFRLPPLIPGSFLIPIGLFWYGWSTQMHIHWIMPIIGLGWVGCGMIATLLPIQAYLVDAFGEYAASAIAANTVVRSIVGAFLPLAGPSMYATLGLGWGNSLLGFVALGLLPVPVVFYFYGKKIRMNSRYQVSV</sequence>